<feature type="chain" id="PRO_0000207537" description="Very long chain fatty acid elongase 1">
    <location>
        <begin position="1"/>
        <end position="279"/>
    </location>
</feature>
<feature type="transmembrane region" description="Helical" evidence="2">
    <location>
        <begin position="23"/>
        <end position="43"/>
    </location>
</feature>
<feature type="transmembrane region" description="Helical" evidence="2">
    <location>
        <begin position="61"/>
        <end position="81"/>
    </location>
</feature>
<feature type="transmembrane region" description="Helical" evidence="2">
    <location>
        <begin position="110"/>
        <end position="130"/>
    </location>
</feature>
<feature type="transmembrane region" description="Helical" evidence="2">
    <location>
        <begin position="137"/>
        <end position="154"/>
    </location>
</feature>
<feature type="transmembrane region" description="Helical" evidence="2">
    <location>
        <begin position="176"/>
        <end position="196"/>
    </location>
</feature>
<feature type="transmembrane region" description="Helical" evidence="2">
    <location>
        <begin position="203"/>
        <end position="223"/>
    </location>
</feature>
<feature type="transmembrane region" description="Helical" evidence="2">
    <location>
        <begin position="231"/>
        <end position="251"/>
    </location>
</feature>
<feature type="short sequence motif" description="Di-lysine motif" evidence="2">
    <location>
        <begin position="275"/>
        <end position="279"/>
    </location>
</feature>
<feature type="modified residue" description="N-acetylmethionine" evidence="1">
    <location>
        <position position="1"/>
    </location>
</feature>
<feature type="sequence conflict" description="In Ref. 3; BAB22975." evidence="7" ref="3">
    <original>YE</original>
    <variation>MR</variation>
    <location>
        <begin position="78"/>
        <end position="79"/>
    </location>
</feature>
<evidence type="ECO:0000250" key="1">
    <source>
        <dbReference type="UniProtKB" id="Q9BW60"/>
    </source>
</evidence>
<evidence type="ECO:0000255" key="2">
    <source>
        <dbReference type="HAMAP-Rule" id="MF_03201"/>
    </source>
</evidence>
<evidence type="ECO:0000269" key="3">
    <source>
    </source>
</evidence>
<evidence type="ECO:0000269" key="4">
    <source>
    </source>
</evidence>
<evidence type="ECO:0000269" key="5">
    <source>
    </source>
</evidence>
<evidence type="ECO:0000269" key="6">
    <source>
    </source>
</evidence>
<evidence type="ECO:0000305" key="7"/>
<evidence type="ECO:0000305" key="8">
    <source>
    </source>
</evidence>
<name>ELOV1_MOUSE</name>
<keyword id="KW-0007">Acetylation</keyword>
<keyword id="KW-0256">Endoplasmic reticulum</keyword>
<keyword id="KW-0275">Fatty acid biosynthesis</keyword>
<keyword id="KW-0276">Fatty acid metabolism</keyword>
<keyword id="KW-0444">Lipid biosynthesis</keyword>
<keyword id="KW-0443">Lipid metabolism</keyword>
<keyword id="KW-0472">Membrane</keyword>
<keyword id="KW-1185">Reference proteome</keyword>
<keyword id="KW-0808">Transferase</keyword>
<keyword id="KW-0812">Transmembrane</keyword>
<keyword id="KW-1133">Transmembrane helix</keyword>
<gene>
    <name evidence="2" type="primary">Elovl1</name>
    <name type="synonym">Ssc1</name>
</gene>
<dbReference type="EC" id="2.3.1.199" evidence="2 4 6"/>
<dbReference type="EMBL" id="AF170907">
    <property type="protein sequence ID" value="AAF72572.1"/>
    <property type="molecule type" value="mRNA"/>
</dbReference>
<dbReference type="EMBL" id="BC006735">
    <property type="protein sequence ID" value="AAH06735.1"/>
    <property type="molecule type" value="mRNA"/>
</dbReference>
<dbReference type="EMBL" id="AK003743">
    <property type="protein sequence ID" value="BAB22975.1"/>
    <property type="molecule type" value="mRNA"/>
</dbReference>
<dbReference type="CCDS" id="CCDS18549.1"/>
<dbReference type="RefSeq" id="NP_001034264.1">
    <property type="nucleotide sequence ID" value="NM_001039175.2"/>
</dbReference>
<dbReference type="RefSeq" id="NP_001034265.1">
    <property type="nucleotide sequence ID" value="NM_001039176.3"/>
</dbReference>
<dbReference type="RefSeq" id="NP_001411917.1">
    <property type="nucleotide sequence ID" value="NM_001424988.1"/>
</dbReference>
<dbReference type="RefSeq" id="NP_062295.1">
    <property type="nucleotide sequence ID" value="NM_019422.4"/>
</dbReference>
<dbReference type="RefSeq" id="XP_006503296.1">
    <property type="nucleotide sequence ID" value="XM_006503233.2"/>
</dbReference>
<dbReference type="SMR" id="Q9JLJ5"/>
<dbReference type="BioGRID" id="207611">
    <property type="interactions" value="2"/>
</dbReference>
<dbReference type="FunCoup" id="Q9JLJ5">
    <property type="interactions" value="802"/>
</dbReference>
<dbReference type="IntAct" id="Q9JLJ5">
    <property type="interactions" value="1"/>
</dbReference>
<dbReference type="STRING" id="10090.ENSMUSP00000006557"/>
<dbReference type="SwissLipids" id="SLP:000000257"/>
<dbReference type="GlyGen" id="Q9JLJ5">
    <property type="glycosylation" value="1 site, 1 O-linked glycan (1 site)"/>
</dbReference>
<dbReference type="PhosphoSitePlus" id="Q9JLJ5"/>
<dbReference type="SwissPalm" id="Q9JLJ5"/>
<dbReference type="jPOST" id="Q9JLJ5"/>
<dbReference type="PaxDb" id="10090-ENSMUSP00000006557"/>
<dbReference type="ProteomicsDB" id="277821"/>
<dbReference type="Pumba" id="Q9JLJ5"/>
<dbReference type="Antibodypedia" id="32316">
    <property type="antibodies" value="215 antibodies from 26 providers"/>
</dbReference>
<dbReference type="Ensembl" id="ENSMUST00000006557.13">
    <property type="protein sequence ID" value="ENSMUSP00000006557.7"/>
    <property type="gene ID" value="ENSMUSG00000006390.16"/>
</dbReference>
<dbReference type="Ensembl" id="ENSMUST00000067896.4">
    <property type="protein sequence ID" value="ENSMUSP00000064816.4"/>
    <property type="gene ID" value="ENSMUSG00000006390.16"/>
</dbReference>
<dbReference type="Ensembl" id="ENSMUST00000167636.8">
    <property type="protein sequence ID" value="ENSMUSP00000126685.2"/>
    <property type="gene ID" value="ENSMUSG00000006390.16"/>
</dbReference>
<dbReference type="GeneID" id="54325"/>
<dbReference type="KEGG" id="mmu:54325"/>
<dbReference type="UCSC" id="uc008ujz.2">
    <property type="organism name" value="mouse"/>
</dbReference>
<dbReference type="AGR" id="MGI:1858959"/>
<dbReference type="CTD" id="64834"/>
<dbReference type="MGI" id="MGI:1858959">
    <property type="gene designation" value="Elovl1"/>
</dbReference>
<dbReference type="VEuPathDB" id="HostDB:ENSMUSG00000006390"/>
<dbReference type="eggNOG" id="KOG3071">
    <property type="taxonomic scope" value="Eukaryota"/>
</dbReference>
<dbReference type="GeneTree" id="ENSGT01050000244838"/>
<dbReference type="HOGENOM" id="CLU_048483_0_0_1"/>
<dbReference type="InParanoid" id="Q9JLJ5"/>
<dbReference type="OMA" id="YSTTRHR"/>
<dbReference type="OrthoDB" id="434092at2759"/>
<dbReference type="PhylomeDB" id="Q9JLJ5"/>
<dbReference type="TreeFam" id="TF323454"/>
<dbReference type="Reactome" id="R-MMU-2046105">
    <property type="pathway name" value="Linoleic acid (LA) metabolism"/>
</dbReference>
<dbReference type="Reactome" id="R-MMU-2046106">
    <property type="pathway name" value="alpha-linolenic acid (ALA) metabolism"/>
</dbReference>
<dbReference type="Reactome" id="R-MMU-75876">
    <property type="pathway name" value="Synthesis of very long-chain fatty acyl-CoAs"/>
</dbReference>
<dbReference type="UniPathway" id="UPA00094"/>
<dbReference type="BioGRID-ORCS" id="54325">
    <property type="hits" value="10 hits in 82 CRISPR screens"/>
</dbReference>
<dbReference type="ChiTaRS" id="Elovl1">
    <property type="organism name" value="mouse"/>
</dbReference>
<dbReference type="PRO" id="PR:Q9JLJ5"/>
<dbReference type="Proteomes" id="UP000000589">
    <property type="component" value="Chromosome 4"/>
</dbReference>
<dbReference type="RNAct" id="Q9JLJ5">
    <property type="molecule type" value="protein"/>
</dbReference>
<dbReference type="Bgee" id="ENSMUSG00000006390">
    <property type="expression patterns" value="Expressed in condyle and 247 other cell types or tissues"/>
</dbReference>
<dbReference type="ExpressionAtlas" id="Q9JLJ5">
    <property type="expression patterns" value="baseline and differential"/>
</dbReference>
<dbReference type="GO" id="GO:0005789">
    <property type="term" value="C:endoplasmic reticulum membrane"/>
    <property type="evidence" value="ECO:0007669"/>
    <property type="project" value="UniProtKB-SubCell"/>
</dbReference>
<dbReference type="GO" id="GO:0009922">
    <property type="term" value="F:fatty acid elongase activity"/>
    <property type="evidence" value="ECO:0007669"/>
    <property type="project" value="UniProtKB-UniRule"/>
</dbReference>
<dbReference type="GO" id="GO:0046513">
    <property type="term" value="P:ceramide biosynthetic process"/>
    <property type="evidence" value="ECO:0000315"/>
    <property type="project" value="UniProtKB"/>
</dbReference>
<dbReference type="GO" id="GO:0061436">
    <property type="term" value="P:establishment of skin barrier"/>
    <property type="evidence" value="ECO:0000315"/>
    <property type="project" value="UniProtKB"/>
</dbReference>
<dbReference type="GO" id="GO:0034625">
    <property type="term" value="P:fatty acid elongation, monounsaturated fatty acid"/>
    <property type="evidence" value="ECO:0000250"/>
    <property type="project" value="UniProtKB"/>
</dbReference>
<dbReference type="GO" id="GO:0019367">
    <property type="term" value="P:fatty acid elongation, saturated fatty acid"/>
    <property type="evidence" value="ECO:0000250"/>
    <property type="project" value="UniProtKB"/>
</dbReference>
<dbReference type="GO" id="GO:0035338">
    <property type="term" value="P:long-chain fatty-acyl-CoA biosynthetic process"/>
    <property type="evidence" value="ECO:0007669"/>
    <property type="project" value="UniProtKB-UniRule"/>
</dbReference>
<dbReference type="GO" id="GO:0030148">
    <property type="term" value="P:sphingolipid biosynthetic process"/>
    <property type="evidence" value="ECO:0000315"/>
    <property type="project" value="UniProtKB"/>
</dbReference>
<dbReference type="GO" id="GO:0006636">
    <property type="term" value="P:unsaturated fatty acid biosynthetic process"/>
    <property type="evidence" value="ECO:0007669"/>
    <property type="project" value="UniProtKB-UniRule"/>
</dbReference>
<dbReference type="GO" id="GO:0042761">
    <property type="term" value="P:very long-chain fatty acid biosynthetic process"/>
    <property type="evidence" value="ECO:0000250"/>
    <property type="project" value="UniProtKB"/>
</dbReference>
<dbReference type="HAMAP" id="MF_03201">
    <property type="entry name" value="VLCF_elongase_1"/>
    <property type="match status" value="1"/>
</dbReference>
<dbReference type="InterPro" id="IPR030457">
    <property type="entry name" value="ELO_CS"/>
</dbReference>
<dbReference type="InterPro" id="IPR002076">
    <property type="entry name" value="ELO_fam"/>
</dbReference>
<dbReference type="InterPro" id="IPR033681">
    <property type="entry name" value="ELOVL1"/>
</dbReference>
<dbReference type="PANTHER" id="PTHR11157:SF19">
    <property type="entry name" value="ELONGATION OF VERY LONG CHAIN FATTY ACIDS PROTEIN 1"/>
    <property type="match status" value="1"/>
</dbReference>
<dbReference type="PANTHER" id="PTHR11157">
    <property type="entry name" value="FATTY ACID ACYL TRANSFERASE-RELATED"/>
    <property type="match status" value="1"/>
</dbReference>
<dbReference type="Pfam" id="PF01151">
    <property type="entry name" value="ELO"/>
    <property type="match status" value="1"/>
</dbReference>
<dbReference type="PROSITE" id="PS01188">
    <property type="entry name" value="ELO"/>
    <property type="match status" value="1"/>
</dbReference>
<protein>
    <recommendedName>
        <fullName evidence="2">Very long chain fatty acid elongase 1</fullName>
        <ecNumber evidence="2 4 6">2.3.1.199</ecNumber>
    </recommendedName>
    <alternativeName>
        <fullName evidence="2">3-keto acyl-CoA synthase Elovl1</fullName>
    </alternativeName>
    <alternativeName>
        <fullName evidence="2">ELOVL fatty acid elongase 1</fullName>
        <shortName evidence="2">ELOVL FA elongase 1</shortName>
    </alternativeName>
    <alternativeName>
        <fullName evidence="2">Elongation of very long chain fatty acids protein 1</fullName>
    </alternativeName>
    <alternativeName>
        <fullName evidence="2">Very long chain 3-ketoacyl-CoA synthase 1</fullName>
    </alternativeName>
    <alternativeName>
        <fullName evidence="2">Very long chain 3-oxoacyl-CoA synthase 1</fullName>
    </alternativeName>
</protein>
<reference key="1">
    <citation type="journal article" date="2000" name="J. Cell Biol.">
        <title>Role of a new mammalian gene family in the biosynthesis of very long chain fatty acids and sphingolipids.</title>
        <authorList>
            <person name="Tvrdik P."/>
            <person name="Westerberg R."/>
            <person name="Silve S."/>
            <person name="Asadi A."/>
            <person name="Jakobsson A."/>
            <person name="Cannon B."/>
            <person name="Loison G."/>
            <person name="Jacobsson A."/>
        </authorList>
    </citation>
    <scope>NUCLEOTIDE SEQUENCE [MRNA]</scope>
    <scope>FUNCTION</scope>
    <scope>TISSUE SPECIFICITY</scope>
    <source>
        <strain>BALB/cJ</strain>
        <tissue>Liver</tissue>
    </source>
</reference>
<reference key="2">
    <citation type="journal article" date="2004" name="Genome Res.">
        <title>The status, quality, and expansion of the NIH full-length cDNA project: the Mammalian Gene Collection (MGC).</title>
        <authorList>
            <consortium name="The MGC Project Team"/>
        </authorList>
    </citation>
    <scope>NUCLEOTIDE SEQUENCE [LARGE SCALE MRNA]</scope>
    <source>
        <tissue>Mammary tumor</tissue>
    </source>
</reference>
<reference key="3">
    <citation type="journal article" date="2005" name="Science">
        <title>The transcriptional landscape of the mammalian genome.</title>
        <authorList>
            <person name="Carninci P."/>
            <person name="Kasukawa T."/>
            <person name="Katayama S."/>
            <person name="Gough J."/>
            <person name="Frith M.C."/>
            <person name="Maeda N."/>
            <person name="Oyama R."/>
            <person name="Ravasi T."/>
            <person name="Lenhard B."/>
            <person name="Wells C."/>
            <person name="Kodzius R."/>
            <person name="Shimokawa K."/>
            <person name="Bajic V.B."/>
            <person name="Brenner S.E."/>
            <person name="Batalov S."/>
            <person name="Forrest A.R."/>
            <person name="Zavolan M."/>
            <person name="Davis M.J."/>
            <person name="Wilming L.G."/>
            <person name="Aidinis V."/>
            <person name="Allen J.E."/>
            <person name="Ambesi-Impiombato A."/>
            <person name="Apweiler R."/>
            <person name="Aturaliya R.N."/>
            <person name="Bailey T.L."/>
            <person name="Bansal M."/>
            <person name="Baxter L."/>
            <person name="Beisel K.W."/>
            <person name="Bersano T."/>
            <person name="Bono H."/>
            <person name="Chalk A.M."/>
            <person name="Chiu K.P."/>
            <person name="Choudhary V."/>
            <person name="Christoffels A."/>
            <person name="Clutterbuck D.R."/>
            <person name="Crowe M.L."/>
            <person name="Dalla E."/>
            <person name="Dalrymple B.P."/>
            <person name="de Bono B."/>
            <person name="Della Gatta G."/>
            <person name="di Bernardo D."/>
            <person name="Down T."/>
            <person name="Engstrom P."/>
            <person name="Fagiolini M."/>
            <person name="Faulkner G."/>
            <person name="Fletcher C.F."/>
            <person name="Fukushima T."/>
            <person name="Furuno M."/>
            <person name="Futaki S."/>
            <person name="Gariboldi M."/>
            <person name="Georgii-Hemming P."/>
            <person name="Gingeras T.R."/>
            <person name="Gojobori T."/>
            <person name="Green R.E."/>
            <person name="Gustincich S."/>
            <person name="Harbers M."/>
            <person name="Hayashi Y."/>
            <person name="Hensch T.K."/>
            <person name="Hirokawa N."/>
            <person name="Hill D."/>
            <person name="Huminiecki L."/>
            <person name="Iacono M."/>
            <person name="Ikeo K."/>
            <person name="Iwama A."/>
            <person name="Ishikawa T."/>
            <person name="Jakt M."/>
            <person name="Kanapin A."/>
            <person name="Katoh M."/>
            <person name="Kawasawa Y."/>
            <person name="Kelso J."/>
            <person name="Kitamura H."/>
            <person name="Kitano H."/>
            <person name="Kollias G."/>
            <person name="Krishnan S.P."/>
            <person name="Kruger A."/>
            <person name="Kummerfeld S.K."/>
            <person name="Kurochkin I.V."/>
            <person name="Lareau L.F."/>
            <person name="Lazarevic D."/>
            <person name="Lipovich L."/>
            <person name="Liu J."/>
            <person name="Liuni S."/>
            <person name="McWilliam S."/>
            <person name="Madan Babu M."/>
            <person name="Madera M."/>
            <person name="Marchionni L."/>
            <person name="Matsuda H."/>
            <person name="Matsuzawa S."/>
            <person name="Miki H."/>
            <person name="Mignone F."/>
            <person name="Miyake S."/>
            <person name="Morris K."/>
            <person name="Mottagui-Tabar S."/>
            <person name="Mulder N."/>
            <person name="Nakano N."/>
            <person name="Nakauchi H."/>
            <person name="Ng P."/>
            <person name="Nilsson R."/>
            <person name="Nishiguchi S."/>
            <person name="Nishikawa S."/>
            <person name="Nori F."/>
            <person name="Ohara O."/>
            <person name="Okazaki Y."/>
            <person name="Orlando V."/>
            <person name="Pang K.C."/>
            <person name="Pavan W.J."/>
            <person name="Pavesi G."/>
            <person name="Pesole G."/>
            <person name="Petrovsky N."/>
            <person name="Piazza S."/>
            <person name="Reed J."/>
            <person name="Reid J.F."/>
            <person name="Ring B.Z."/>
            <person name="Ringwald M."/>
            <person name="Rost B."/>
            <person name="Ruan Y."/>
            <person name="Salzberg S.L."/>
            <person name="Sandelin A."/>
            <person name="Schneider C."/>
            <person name="Schoenbach C."/>
            <person name="Sekiguchi K."/>
            <person name="Semple C.A."/>
            <person name="Seno S."/>
            <person name="Sessa L."/>
            <person name="Sheng Y."/>
            <person name="Shibata Y."/>
            <person name="Shimada H."/>
            <person name="Shimada K."/>
            <person name="Silva D."/>
            <person name="Sinclair B."/>
            <person name="Sperling S."/>
            <person name="Stupka E."/>
            <person name="Sugiura K."/>
            <person name="Sultana R."/>
            <person name="Takenaka Y."/>
            <person name="Taki K."/>
            <person name="Tammoja K."/>
            <person name="Tan S.L."/>
            <person name="Tang S."/>
            <person name="Taylor M.S."/>
            <person name="Tegner J."/>
            <person name="Teichmann S.A."/>
            <person name="Ueda H.R."/>
            <person name="van Nimwegen E."/>
            <person name="Verardo R."/>
            <person name="Wei C.L."/>
            <person name="Yagi K."/>
            <person name="Yamanishi H."/>
            <person name="Zabarovsky E."/>
            <person name="Zhu S."/>
            <person name="Zimmer A."/>
            <person name="Hide W."/>
            <person name="Bult C."/>
            <person name="Grimmond S.M."/>
            <person name="Teasdale R.D."/>
            <person name="Liu E.T."/>
            <person name="Brusic V."/>
            <person name="Quackenbush J."/>
            <person name="Wahlestedt C."/>
            <person name="Mattick J.S."/>
            <person name="Hume D.A."/>
            <person name="Kai C."/>
            <person name="Sasaki D."/>
            <person name="Tomaru Y."/>
            <person name="Fukuda S."/>
            <person name="Kanamori-Katayama M."/>
            <person name="Suzuki M."/>
            <person name="Aoki J."/>
            <person name="Arakawa T."/>
            <person name="Iida J."/>
            <person name="Imamura K."/>
            <person name="Itoh M."/>
            <person name="Kato T."/>
            <person name="Kawaji H."/>
            <person name="Kawagashira N."/>
            <person name="Kawashima T."/>
            <person name="Kojima M."/>
            <person name="Kondo S."/>
            <person name="Konno H."/>
            <person name="Nakano K."/>
            <person name="Ninomiya N."/>
            <person name="Nishio T."/>
            <person name="Okada M."/>
            <person name="Plessy C."/>
            <person name="Shibata K."/>
            <person name="Shiraki T."/>
            <person name="Suzuki S."/>
            <person name="Tagami M."/>
            <person name="Waki K."/>
            <person name="Watahiki A."/>
            <person name="Okamura-Oho Y."/>
            <person name="Suzuki H."/>
            <person name="Kawai J."/>
            <person name="Hayashizaki Y."/>
        </authorList>
    </citation>
    <scope>NUCLEOTIDE SEQUENCE [LARGE SCALE MRNA] OF 78-279</scope>
    <source>
        <strain>C57BL/6J</strain>
        <tissue>Embryo</tissue>
    </source>
</reference>
<reference key="4">
    <citation type="journal article" date="2010" name="Cell">
        <title>A tissue-specific atlas of mouse protein phosphorylation and expression.</title>
        <authorList>
            <person name="Huttlin E.L."/>
            <person name="Jedrychowski M.P."/>
            <person name="Elias J.E."/>
            <person name="Goswami T."/>
            <person name="Rad R."/>
            <person name="Beausoleil S.A."/>
            <person name="Villen J."/>
            <person name="Haas W."/>
            <person name="Sowa M.E."/>
            <person name="Gygi S.P."/>
        </authorList>
    </citation>
    <scope>IDENTIFICATION BY MASS SPECTROMETRY [LARGE SCALE ANALYSIS]</scope>
    <source>
        <tissue>Kidney</tissue>
        <tissue>Liver</tissue>
        <tissue>Lung</tissue>
        <tissue>Pancreas</tissue>
        <tissue>Spleen</tissue>
    </source>
</reference>
<reference key="5">
    <citation type="journal article" date="2010" name="Proc. Natl. Acad. Sci. U.S.A.">
        <title>ELOVL1 production of C24 acyl-CoAs is linked to C24 sphingolipid synthesis.</title>
        <authorList>
            <person name="Ohno Y."/>
            <person name="Suto S."/>
            <person name="Yamanaka M."/>
            <person name="Mizutani Y."/>
            <person name="Mitsutake S."/>
            <person name="Igarashi Y."/>
            <person name="Sassa T."/>
            <person name="Kihara A."/>
        </authorList>
    </citation>
    <scope>FUNCTION</scope>
    <scope>CATALYTIC ACTIVITY</scope>
    <scope>PATHWAY</scope>
</reference>
<reference key="6">
    <citation type="journal article" date="2013" name="J. Neurosci.">
        <title>Fatty acid transport protein 4 (FATP4) prevents light-induced degeneration of cone and rod photoreceptors by inhibiting RPE65 isomerase.</title>
        <authorList>
            <person name="Li S."/>
            <person name="Lee J."/>
            <person name="Zhou Y."/>
            <person name="Gordon W.C."/>
            <person name="Hill J.M."/>
            <person name="Bazan N.G."/>
            <person name="Miner J.H."/>
            <person name="Jin M."/>
        </authorList>
    </citation>
    <scope>FUNCTION</scope>
</reference>
<reference key="7">
    <citation type="journal article" date="2013" name="Mol. Cell. Biol.">
        <title>Impaired epidermal permeability barrier in mice lacking elovl1, the gene responsible for very-long-chain fatty acid production.</title>
        <authorList>
            <person name="Sassa T."/>
            <person name="Ohno Y."/>
            <person name="Suzuki S."/>
            <person name="Nomura T."/>
            <person name="Nishioka C."/>
            <person name="Kashiwagi T."/>
            <person name="Hirayama T."/>
            <person name="Akiyama M."/>
            <person name="Taguchi R."/>
            <person name="Shimizu H."/>
            <person name="Itohara S."/>
            <person name="Kihara A."/>
        </authorList>
    </citation>
    <scope>FUNCTION</scope>
    <scope>CATALYTIC ACTIVITY</scope>
    <scope>DISRUPTION PHENOTYPE</scope>
    <scope>CAUTION</scope>
</reference>
<proteinExistence type="evidence at protein level"/>
<sequence length="279" mass="32678">MEAVVNLYHELMKHADPRIQSYPLMGSPLLITSILLTYVYFILSLGPRIMANRKPFQLRGFMIVYNFSLVILSLYIVYEFLMSGWLSTYTWRCDPIDFSNSPEALRMVRVAWLFMLSKVIELMDTVIFILRKKDGQVTFLHVFHHSVLPWSWWWGIKIAPGGMGSFHAMINSSVHVVMYLYYGLSALGPVAQPYLWWKKHMTAIQLIQFVLVSLHISQYYFMPSCNYQYPIIIHLIWMYGTIFFILFSNFWYHSYTKGKRLPRAVQQNGAPATTKVKAN</sequence>
<accession>Q9JLJ5</accession>
<accession>Q9D1B2</accession>
<organism>
    <name type="scientific">Mus musculus</name>
    <name type="common">Mouse</name>
    <dbReference type="NCBI Taxonomy" id="10090"/>
    <lineage>
        <taxon>Eukaryota</taxon>
        <taxon>Metazoa</taxon>
        <taxon>Chordata</taxon>
        <taxon>Craniata</taxon>
        <taxon>Vertebrata</taxon>
        <taxon>Euteleostomi</taxon>
        <taxon>Mammalia</taxon>
        <taxon>Eutheria</taxon>
        <taxon>Euarchontoglires</taxon>
        <taxon>Glires</taxon>
        <taxon>Rodentia</taxon>
        <taxon>Myomorpha</taxon>
        <taxon>Muroidea</taxon>
        <taxon>Muridae</taxon>
        <taxon>Murinae</taxon>
        <taxon>Mus</taxon>
        <taxon>Mus</taxon>
    </lineage>
</organism>
<comment type="function">
    <text evidence="2 3 4 5 6">Catalyzes the first and rate-limiting reaction of the four reactions that constitute the long-chain fatty acids elongation cycle. This endoplasmic reticulum-bound enzymatic process allows the addition of 2 carbons to the chain of long- and very long-chain fatty acids (VLCFAs) per cycle. Condensing enzyme that exhibits activity toward saturated and monounsaturated acyl-CoA substrates, with the highest activity towards C22:0 acyl-CoA. May participate in the production of both saturated and monounsaturated VLCFAs of different chain lengths that are involved in multiple biological processes as precursors of membrane lipids and lipid mediators. Important for saturated C24:0 and monounsaturated C24:1 sphingolipid synthesis. Indirectly inhibits RPE65 via production of VLCFAs.</text>
</comment>
<comment type="catalytic activity">
    <reaction evidence="2 4 6">
        <text>a very-long-chain acyl-CoA + malonyl-CoA + H(+) = a very-long-chain 3-oxoacyl-CoA + CO2 + CoA</text>
        <dbReference type="Rhea" id="RHEA:32727"/>
        <dbReference type="ChEBI" id="CHEBI:15378"/>
        <dbReference type="ChEBI" id="CHEBI:16526"/>
        <dbReference type="ChEBI" id="CHEBI:57287"/>
        <dbReference type="ChEBI" id="CHEBI:57384"/>
        <dbReference type="ChEBI" id="CHEBI:90725"/>
        <dbReference type="ChEBI" id="CHEBI:90736"/>
        <dbReference type="EC" id="2.3.1.199"/>
    </reaction>
    <physiologicalReaction direction="left-to-right" evidence="4">
        <dbReference type="Rhea" id="RHEA:32728"/>
    </physiologicalReaction>
</comment>
<comment type="catalytic activity">
    <reaction evidence="4 6">
        <text>eicosanoyl-CoA + malonyl-CoA + H(+) = 3-oxodocosanoyl-CoA + CO2 + CoA</text>
        <dbReference type="Rhea" id="RHEA:35327"/>
        <dbReference type="ChEBI" id="CHEBI:15378"/>
        <dbReference type="ChEBI" id="CHEBI:16526"/>
        <dbReference type="ChEBI" id="CHEBI:57287"/>
        <dbReference type="ChEBI" id="CHEBI:57380"/>
        <dbReference type="ChEBI" id="CHEBI:57384"/>
        <dbReference type="ChEBI" id="CHEBI:71451"/>
    </reaction>
    <physiologicalReaction direction="left-to-right" evidence="4">
        <dbReference type="Rhea" id="RHEA:35328"/>
    </physiologicalReaction>
</comment>
<comment type="catalytic activity">
    <reaction evidence="4 6">
        <text>docosanoyl-CoA + malonyl-CoA + H(+) = 3-oxotetracosanoyl-CoA + CO2 + CoA</text>
        <dbReference type="Rhea" id="RHEA:36507"/>
        <dbReference type="ChEBI" id="CHEBI:15378"/>
        <dbReference type="ChEBI" id="CHEBI:16526"/>
        <dbReference type="ChEBI" id="CHEBI:57287"/>
        <dbReference type="ChEBI" id="CHEBI:57384"/>
        <dbReference type="ChEBI" id="CHEBI:65059"/>
        <dbReference type="ChEBI" id="CHEBI:73977"/>
    </reaction>
    <physiologicalReaction direction="left-to-right" evidence="4">
        <dbReference type="Rhea" id="RHEA:36508"/>
    </physiologicalReaction>
</comment>
<comment type="catalytic activity">
    <reaction evidence="6">
        <text>tetracosanoyl-CoA + malonyl-CoA + H(+) = 3-oxohexacosanoyl-CoA + CO2 + CoA</text>
        <dbReference type="Rhea" id="RHEA:36515"/>
        <dbReference type="ChEBI" id="CHEBI:15378"/>
        <dbReference type="ChEBI" id="CHEBI:16526"/>
        <dbReference type="ChEBI" id="CHEBI:57287"/>
        <dbReference type="ChEBI" id="CHEBI:57384"/>
        <dbReference type="ChEBI" id="CHEBI:65052"/>
        <dbReference type="ChEBI" id="CHEBI:73980"/>
    </reaction>
    <physiologicalReaction direction="left-to-right" evidence="8">
        <dbReference type="Rhea" id="RHEA:36516"/>
    </physiologicalReaction>
</comment>
<comment type="catalytic activity">
    <reaction evidence="1">
        <text>(11Z)-eicosenoyl-CoA + malonyl-CoA + H(+) = 3-oxo-(13Z)-docosenoyl-CoA + CO2 + CoA</text>
        <dbReference type="Rhea" id="RHEA:36527"/>
        <dbReference type="ChEBI" id="CHEBI:15378"/>
        <dbReference type="ChEBI" id="CHEBI:16526"/>
        <dbReference type="ChEBI" id="CHEBI:57287"/>
        <dbReference type="ChEBI" id="CHEBI:57384"/>
        <dbReference type="ChEBI" id="CHEBI:74069"/>
        <dbReference type="ChEBI" id="CHEBI:74070"/>
    </reaction>
</comment>
<comment type="catalytic activity">
    <reaction evidence="1">
        <text>(13Z)-docosenoyl-CoA + malonyl-CoA + H(+) = 3-oxo-(15Z)-tetracosenoyl-CoA + CO2 + CoA</text>
        <dbReference type="Rhea" id="RHEA:36531"/>
        <dbReference type="ChEBI" id="CHEBI:15378"/>
        <dbReference type="ChEBI" id="CHEBI:16526"/>
        <dbReference type="ChEBI" id="CHEBI:57287"/>
        <dbReference type="ChEBI" id="CHEBI:57384"/>
        <dbReference type="ChEBI" id="CHEBI:74068"/>
        <dbReference type="ChEBI" id="CHEBI:74071"/>
    </reaction>
</comment>
<comment type="pathway">
    <text evidence="2 4">Lipid metabolism; fatty acid biosynthesis.</text>
</comment>
<comment type="subunit">
    <text evidence="1 2">Interacts with LASS2, TECR and HSD17B12. Interacts with TECR (By similarity).</text>
</comment>
<comment type="subcellular location">
    <subcellularLocation>
        <location evidence="2">Endoplasmic reticulum membrane</location>
        <topology evidence="2">Multi-pass membrane protein</topology>
    </subcellularLocation>
</comment>
<comment type="tissue specificity">
    <text evidence="3">Expressed in a broad variety of tissues. Highly expressed in stomach, lung, kidney, skin and intestine. Moderately expressed in white adipose tissue, liver, spleen, brain, brown adipose tissue, heart and muscle. Weakly expressed in testis.</text>
</comment>
<comment type="domain">
    <text evidence="2">The C-terminal di-lysine motif may confer endoplasmic reticulum localization.</text>
</comment>
<comment type="disruption phenotype">
    <text evidence="6">Homozygous knockout mice die within one day after birth (PubMed:23689133). Death is caused by a skin barrier deficiency and excessive water loss that are associated with impaired formation of lipid lamellae in the stratum corneum (PubMed:23689133). In the epidermis, the levels of ceramides with fatty acid chains containing more than 26 carbons are decreased, while the levels of ceramides with less than 24 carbons are increased (PubMed:23689133).</text>
</comment>
<comment type="similarity">
    <text evidence="2">Belongs to the ELO family. ELOVL1 subfamily.</text>
</comment>
<comment type="caution">
    <text evidence="6 8">The substrate specificity could be slightly different compared to human ELOVL1, AC Q9BW60. No activity toward octadecanoyl-CoA, for instance, is observed in vivo (PubMed:23689133).</text>
</comment>